<accession>A0AIR1</accession>
<feature type="chain" id="PRO_1000012138" description="DNA repair protein RecO">
    <location>
        <begin position="1"/>
        <end position="255"/>
    </location>
</feature>
<dbReference type="EMBL" id="AM263198">
    <property type="protein sequence ID" value="CAK20893.1"/>
    <property type="molecule type" value="Genomic_DNA"/>
</dbReference>
<dbReference type="RefSeq" id="WP_011702268.1">
    <property type="nucleotide sequence ID" value="NC_008555.1"/>
</dbReference>
<dbReference type="SMR" id="A0AIR1"/>
<dbReference type="STRING" id="386043.lwe1475"/>
<dbReference type="GeneID" id="61189351"/>
<dbReference type="KEGG" id="lwe:lwe1475"/>
<dbReference type="eggNOG" id="COG1381">
    <property type="taxonomic scope" value="Bacteria"/>
</dbReference>
<dbReference type="HOGENOM" id="CLU_066632_4_0_9"/>
<dbReference type="OrthoDB" id="9797083at2"/>
<dbReference type="Proteomes" id="UP000000779">
    <property type="component" value="Chromosome"/>
</dbReference>
<dbReference type="GO" id="GO:0043590">
    <property type="term" value="C:bacterial nucleoid"/>
    <property type="evidence" value="ECO:0007669"/>
    <property type="project" value="TreeGrafter"/>
</dbReference>
<dbReference type="GO" id="GO:0006310">
    <property type="term" value="P:DNA recombination"/>
    <property type="evidence" value="ECO:0007669"/>
    <property type="project" value="UniProtKB-UniRule"/>
</dbReference>
<dbReference type="GO" id="GO:0006302">
    <property type="term" value="P:double-strand break repair"/>
    <property type="evidence" value="ECO:0007669"/>
    <property type="project" value="TreeGrafter"/>
</dbReference>
<dbReference type="Gene3D" id="2.40.50.140">
    <property type="entry name" value="Nucleic acid-binding proteins"/>
    <property type="match status" value="1"/>
</dbReference>
<dbReference type="Gene3D" id="1.20.1440.120">
    <property type="entry name" value="Recombination protein O, C-terminal domain"/>
    <property type="match status" value="1"/>
</dbReference>
<dbReference type="HAMAP" id="MF_00201">
    <property type="entry name" value="RecO"/>
    <property type="match status" value="1"/>
</dbReference>
<dbReference type="InterPro" id="IPR037278">
    <property type="entry name" value="ARFGAP/RecO"/>
</dbReference>
<dbReference type="InterPro" id="IPR022572">
    <property type="entry name" value="DNA_rep/recomb_RecO_N"/>
</dbReference>
<dbReference type="InterPro" id="IPR012340">
    <property type="entry name" value="NA-bd_OB-fold"/>
</dbReference>
<dbReference type="InterPro" id="IPR003717">
    <property type="entry name" value="RecO"/>
</dbReference>
<dbReference type="InterPro" id="IPR042242">
    <property type="entry name" value="RecO_C"/>
</dbReference>
<dbReference type="NCBIfam" id="TIGR00613">
    <property type="entry name" value="reco"/>
    <property type="match status" value="1"/>
</dbReference>
<dbReference type="PANTHER" id="PTHR33991">
    <property type="entry name" value="DNA REPAIR PROTEIN RECO"/>
    <property type="match status" value="1"/>
</dbReference>
<dbReference type="PANTHER" id="PTHR33991:SF1">
    <property type="entry name" value="DNA REPAIR PROTEIN RECO"/>
    <property type="match status" value="1"/>
</dbReference>
<dbReference type="Pfam" id="PF02565">
    <property type="entry name" value="RecO_C"/>
    <property type="match status" value="1"/>
</dbReference>
<dbReference type="Pfam" id="PF11967">
    <property type="entry name" value="RecO_N"/>
    <property type="match status" value="1"/>
</dbReference>
<dbReference type="SUPFAM" id="SSF57863">
    <property type="entry name" value="ArfGap/RecO-like zinc finger"/>
    <property type="match status" value="1"/>
</dbReference>
<dbReference type="SUPFAM" id="SSF50249">
    <property type="entry name" value="Nucleic acid-binding proteins"/>
    <property type="match status" value="1"/>
</dbReference>
<comment type="function">
    <text evidence="1">Involved in DNA repair and RecF pathway recombination.</text>
</comment>
<comment type="similarity">
    <text evidence="1">Belongs to the RecO family.</text>
</comment>
<sequence length="255" mass="29844">MEKCEGIVIRQTSYRESDKIVRMYTREFGKIGVVARGAKKTKSRLAAVTQLFTNGYFTFFGGNGLGTLQQGEVIENFSSIQQDIFMTAYATYVCELLDKATEERQPNPYLYELTFQILRDIDEGYDPQILTQIYEMKMLPVLGLYPTMDKCAICGETTGHFDFSTRSNGIICHRCFEKDRYRMHLPENVVKLLRLFFIFQLDRLGNIDVKQETKDWLQKAIDTYYDENSGLYLKSRKFLRDMDKWENMLKKDSDD</sequence>
<protein>
    <recommendedName>
        <fullName evidence="1">DNA repair protein RecO</fullName>
    </recommendedName>
    <alternativeName>
        <fullName evidence="1">Recombination protein O</fullName>
    </alternativeName>
</protein>
<keyword id="KW-0227">DNA damage</keyword>
<keyword id="KW-0233">DNA recombination</keyword>
<keyword id="KW-0234">DNA repair</keyword>
<evidence type="ECO:0000255" key="1">
    <source>
        <dbReference type="HAMAP-Rule" id="MF_00201"/>
    </source>
</evidence>
<organism>
    <name type="scientific">Listeria welshimeri serovar 6b (strain ATCC 35897 / DSM 20650 / CCUG 15529 / CIP 8149 / NCTC 11857 / SLCC 5334 / V8)</name>
    <dbReference type="NCBI Taxonomy" id="386043"/>
    <lineage>
        <taxon>Bacteria</taxon>
        <taxon>Bacillati</taxon>
        <taxon>Bacillota</taxon>
        <taxon>Bacilli</taxon>
        <taxon>Bacillales</taxon>
        <taxon>Listeriaceae</taxon>
        <taxon>Listeria</taxon>
    </lineage>
</organism>
<gene>
    <name evidence="1" type="primary">recO</name>
    <name type="ordered locus">lwe1475</name>
</gene>
<name>RECO_LISW6</name>
<reference key="1">
    <citation type="journal article" date="2006" name="J. Bacteriol.">
        <title>Whole-genome sequence of Listeria welshimeri reveals common steps in genome reduction with Listeria innocua as compared to Listeria monocytogenes.</title>
        <authorList>
            <person name="Hain T."/>
            <person name="Steinweg C."/>
            <person name="Kuenne C.T."/>
            <person name="Billion A."/>
            <person name="Ghai R."/>
            <person name="Chatterjee S.S."/>
            <person name="Domann E."/>
            <person name="Kaerst U."/>
            <person name="Goesmann A."/>
            <person name="Bekel T."/>
            <person name="Bartels D."/>
            <person name="Kaiser O."/>
            <person name="Meyer F."/>
            <person name="Puehler A."/>
            <person name="Weisshaar B."/>
            <person name="Wehland J."/>
            <person name="Liang C."/>
            <person name="Dandekar T."/>
            <person name="Lampidis R."/>
            <person name="Kreft J."/>
            <person name="Goebel W."/>
            <person name="Chakraborty T."/>
        </authorList>
    </citation>
    <scope>NUCLEOTIDE SEQUENCE [LARGE SCALE GENOMIC DNA]</scope>
    <source>
        <strain>ATCC 35897 / DSM 20650 / CCUG 15529 / CIP 8149 / NCTC 11857 / SLCC 5334 / V8</strain>
    </source>
</reference>
<proteinExistence type="inferred from homology"/>